<proteinExistence type="evidence at transcript level"/>
<comment type="function">
    <text evidence="1 2">Transcriptional regulator. Recognizes and binds to the DNA sequence 5'-GCG(T/G)GGGCG-3'(EGR-site) in the promoter region of target genes (By similarity). Binds double-stranded target DNA, irrespective of the cytosine methylation status (By similarity). Regulates the transcription of numerous target genes, and thereby plays an important role in regulating the response to growth factors, DNA damage, and ischemia. Plays a role in the regulation of cell survival, proliferation and cell death. Activates expression of p53/TP53 and TGFB1, and thereby helps prevent tumor formation. Required for normal progress through mitosis and normal proliferation of hepatocytes after partial hepatectomy. Mediates responses to ischemia and hypoxia; regulates the expression of proteins such as IL1B and CXCL2 that are involved in inflammatory processes and development of tissue damage after ischemia. Regulates biosynthesis of luteinizing hormone (LHB) in the pituitary (By similarity). Regulates the amplitude of the expression rhythms of clock genes: BMAL1, PER2 and NR1D1 in the liver via the activation of PER1 (clock repressor) transcription. Regulates the rhythmic expression of core-clock gene BMAL1 in the suprachiasmatic nucleus (SCN) (By similarity).</text>
</comment>
<comment type="subunit">
    <text evidence="2">Interacts with SNAI1 and SP1 upon 12-O-tetradecanoylphorbol-13-acetate (TPA) induction.</text>
</comment>
<comment type="subcellular location">
    <subcellularLocation>
        <location evidence="2">Nucleus</location>
    </subcellularLocation>
    <subcellularLocation>
        <location evidence="2">Cytoplasm</location>
    </subcellularLocation>
</comment>
<comment type="domain">
    <text evidence="2">Binds to DNA motifs with the sequence 5'-GCG(T/G)GGGCG-3' via its C2H2-type zinc fingers. The first, most N-terminal zinc finger binds to the 3'-GCG motif, the middle zinc finger interacts with the central TGG motif, and the C-terminal zinc finger binds to the 5'-GCG motif. Binds double-stranded target DNA, irrespective of the cytosine methylation status. Has reduced affinity for target DNA where the cytosines have been oxidized to 5-hydroxymethylcytosine. Does not bind target DNA where the cytosines have been oxidized to 5-formylcytosine or 5-carboxylcytosine.</text>
</comment>
<comment type="similarity">
    <text evidence="5">Belongs to the EGR C2H2-type zinc-finger protein family.</text>
</comment>
<evidence type="ECO:0000250" key="1">
    <source>
        <dbReference type="UniProtKB" id="P08046"/>
    </source>
</evidence>
<evidence type="ECO:0000250" key="2">
    <source>
        <dbReference type="UniProtKB" id="P18146"/>
    </source>
</evidence>
<evidence type="ECO:0000255" key="3">
    <source>
        <dbReference type="PROSITE-ProRule" id="PRU00042"/>
    </source>
</evidence>
<evidence type="ECO:0000256" key="4">
    <source>
        <dbReference type="SAM" id="MobiDB-lite"/>
    </source>
</evidence>
<evidence type="ECO:0000305" key="5"/>
<organism>
    <name type="scientific">Bos taurus</name>
    <name type="common">Bovine</name>
    <dbReference type="NCBI Taxonomy" id="9913"/>
    <lineage>
        <taxon>Eukaryota</taxon>
        <taxon>Metazoa</taxon>
        <taxon>Chordata</taxon>
        <taxon>Craniata</taxon>
        <taxon>Vertebrata</taxon>
        <taxon>Euteleostomi</taxon>
        <taxon>Mammalia</taxon>
        <taxon>Eutheria</taxon>
        <taxon>Laurasiatheria</taxon>
        <taxon>Artiodactyla</taxon>
        <taxon>Ruminantia</taxon>
        <taxon>Pecora</taxon>
        <taxon>Bovidae</taxon>
        <taxon>Bovinae</taxon>
        <taxon>Bos</taxon>
    </lineage>
</organism>
<reference key="1">
    <citation type="submission" date="2005-02" db="EMBL/GenBank/DDBJ databases">
        <title>Characterization of bovine early growth response 1.</title>
        <authorList>
            <person name="Sayasith K."/>
            <person name="Sirois J."/>
        </authorList>
    </citation>
    <scope>NUCLEOTIDE SEQUENCE [MRNA]</scope>
    <source>
        <tissue>Ovarian follicle</tissue>
    </source>
</reference>
<sequence length="540" mass="57115">MAAAKAEMQLMSPLQISDPFGSFPHSPTMDNYPKLEEMMLSNGAPQFLGAAGAPEGSSGSSSGSSGGGGGGGGGSSSSNSNSSSAFNPQGEASEQPYEHLTAESFPDISLNNEKVLVETSYPSQTTRLPPITYTGRFSLEPAPNSGNTLWPEPLFSLVSGLVSMTNPPATSSSASSPAASSSASQSPPLSCAVQSNDSSPIYSAAPTFPTPNTDIFPEPQGQAFPGSAGPALQYPPPAYPGAKGGFQVPMIPDYLFPQQQGDLGLGTPDQKPFQGLESRTQQPSLTPLSTIKAFATQSGSQDLKALNSTYQSQLIKPSRMRKYPNRPSKTPPHERPYACPVESCDRRFSRSDELTRHIRIHTGQKPQCRISMRNFSRSDHLTTHIRTHTGEKPFACDICGRKFARSDERKRHTKIHLRQKDKKADKSAASAATSSLPSYPSPVATSYPSPATTSYPSPATTSYPSPVPTSYSSPGSSTYPSPVHNGFPSPSVATTYSSVPPAFPTQVSSFPSSAVTNSFSASTGLSDMTTTFSPRTIEIC</sequence>
<protein>
    <recommendedName>
        <fullName>Early growth response protein 1</fullName>
        <shortName>EGR-1</shortName>
    </recommendedName>
</protein>
<keyword id="KW-0010">Activator</keyword>
<keyword id="KW-0090">Biological rhythms</keyword>
<keyword id="KW-0963">Cytoplasm</keyword>
<keyword id="KW-0238">DNA-binding</keyword>
<keyword id="KW-1017">Isopeptide bond</keyword>
<keyword id="KW-0479">Metal-binding</keyword>
<keyword id="KW-0539">Nucleus</keyword>
<keyword id="KW-1185">Reference proteome</keyword>
<keyword id="KW-0677">Repeat</keyword>
<keyword id="KW-0804">Transcription</keyword>
<keyword id="KW-0805">Transcription regulation</keyword>
<keyword id="KW-0832">Ubl conjugation</keyword>
<keyword id="KW-0862">Zinc</keyword>
<keyword id="KW-0863">Zinc-finger</keyword>
<feature type="chain" id="PRO_0000244380" description="Early growth response protein 1">
    <location>
        <begin position="1"/>
        <end position="540"/>
    </location>
</feature>
<feature type="zinc finger region" description="C2H2-type 1" evidence="3">
    <location>
        <begin position="337"/>
        <end position="361"/>
    </location>
</feature>
<feature type="zinc finger region" description="C2H2-type 2; degenerate" evidence="3">
    <location>
        <begin position="366"/>
        <end position="388"/>
    </location>
</feature>
<feature type="zinc finger region" description="C2H2-type 3" evidence="3">
    <location>
        <begin position="394"/>
        <end position="416"/>
    </location>
</feature>
<feature type="region of interest" description="Disordered" evidence="4">
    <location>
        <begin position="1"/>
        <end position="105"/>
    </location>
</feature>
<feature type="region of interest" description="Disordered" evidence="4">
    <location>
        <begin position="162"/>
        <end position="240"/>
    </location>
</feature>
<feature type="region of interest" description="Disordered" evidence="4">
    <location>
        <begin position="317"/>
        <end position="337"/>
    </location>
</feature>
<feature type="region of interest" description="Disordered" evidence="4">
    <location>
        <begin position="407"/>
        <end position="482"/>
    </location>
</feature>
<feature type="compositionally biased region" description="Gly residues" evidence="4">
    <location>
        <begin position="64"/>
        <end position="75"/>
    </location>
</feature>
<feature type="compositionally biased region" description="Low complexity" evidence="4">
    <location>
        <begin position="167"/>
        <end position="190"/>
    </location>
</feature>
<feature type="compositionally biased region" description="Polar residues" evidence="4">
    <location>
        <begin position="192"/>
        <end position="201"/>
    </location>
</feature>
<feature type="compositionally biased region" description="Basic residues" evidence="4">
    <location>
        <begin position="411"/>
        <end position="421"/>
    </location>
</feature>
<feature type="compositionally biased region" description="Low complexity" evidence="4">
    <location>
        <begin position="427"/>
        <end position="482"/>
    </location>
</feature>
<feature type="site" description="Interaction with DNA" evidence="2">
    <location>
        <position position="335"/>
    </location>
</feature>
<feature type="site" description="Interaction with DNA" evidence="1">
    <location>
        <position position="346"/>
    </location>
</feature>
<feature type="site" description="Interaction with DNA" evidence="1">
    <location>
        <position position="350"/>
    </location>
</feature>
<feature type="site" description="Interaction with DNA" evidence="2">
    <location>
        <position position="356"/>
    </location>
</feature>
<feature type="site" description="Interaction with DNA" evidence="1">
    <location>
        <position position="373"/>
    </location>
</feature>
<feature type="site" description="Interaction with DNA" evidence="2">
    <location>
        <position position="377"/>
    </location>
</feature>
<feature type="site" description="Interaction with DNA" evidence="2">
    <location>
        <position position="401"/>
    </location>
</feature>
<feature type="site" description="Interaction with DNA" evidence="2">
    <location>
        <position position="405"/>
    </location>
</feature>
<feature type="site" description="Interaction with DNA" evidence="2">
    <location>
        <position position="411"/>
    </location>
</feature>
<feature type="cross-link" description="Glycyl lysine isopeptide (Lys-Gly) (interchain with G-Cter in SUMO2)" evidence="2">
    <location>
        <position position="304"/>
    </location>
</feature>
<name>EGR1_BOVIN</name>
<gene>
    <name type="primary">EGR1</name>
</gene>
<accession>Q29W20</accession>
<dbReference type="EMBL" id="AY924307">
    <property type="protein sequence ID" value="AAY16442.1"/>
    <property type="molecule type" value="mRNA"/>
</dbReference>
<dbReference type="RefSeq" id="NP_001039340.1">
    <property type="nucleotide sequence ID" value="NM_001045875.1"/>
</dbReference>
<dbReference type="SMR" id="Q29W20"/>
<dbReference type="FunCoup" id="Q29W20">
    <property type="interactions" value="314"/>
</dbReference>
<dbReference type="STRING" id="9913.ENSBTAP00000013284"/>
<dbReference type="iPTMnet" id="Q29W20"/>
<dbReference type="PaxDb" id="9913-ENSBTAP00000013284"/>
<dbReference type="GeneID" id="407125"/>
<dbReference type="KEGG" id="bta:407125"/>
<dbReference type="CTD" id="1958"/>
<dbReference type="eggNOG" id="KOG1721">
    <property type="taxonomic scope" value="Eukaryota"/>
</dbReference>
<dbReference type="InParanoid" id="Q29W20"/>
<dbReference type="OrthoDB" id="10018191at2759"/>
<dbReference type="Proteomes" id="UP000009136">
    <property type="component" value="Unplaced"/>
</dbReference>
<dbReference type="GO" id="GO:0005737">
    <property type="term" value="C:cytoplasm"/>
    <property type="evidence" value="ECO:0000250"/>
    <property type="project" value="UniProtKB"/>
</dbReference>
<dbReference type="GO" id="GO:0005654">
    <property type="term" value="C:nucleoplasm"/>
    <property type="evidence" value="ECO:0007669"/>
    <property type="project" value="UniProtKB-ARBA"/>
</dbReference>
<dbReference type="GO" id="GO:0005634">
    <property type="term" value="C:nucleus"/>
    <property type="evidence" value="ECO:0000250"/>
    <property type="project" value="UniProtKB"/>
</dbReference>
<dbReference type="GO" id="GO:0000981">
    <property type="term" value="F:DNA-binding transcription factor activity, RNA polymerase II-specific"/>
    <property type="evidence" value="ECO:0000318"/>
    <property type="project" value="GO_Central"/>
</dbReference>
<dbReference type="GO" id="GO:0010385">
    <property type="term" value="F:double-stranded methylated DNA binding"/>
    <property type="evidence" value="ECO:0000250"/>
    <property type="project" value="UniProtKB"/>
</dbReference>
<dbReference type="GO" id="GO:0044729">
    <property type="term" value="F:hemi-methylated DNA-binding"/>
    <property type="evidence" value="ECO:0000250"/>
    <property type="project" value="UniProtKB"/>
</dbReference>
<dbReference type="GO" id="GO:1990841">
    <property type="term" value="F:promoter-specific chromatin binding"/>
    <property type="evidence" value="ECO:0000250"/>
    <property type="project" value="UniProtKB"/>
</dbReference>
<dbReference type="GO" id="GO:0000978">
    <property type="term" value="F:RNA polymerase II cis-regulatory region sequence-specific DNA binding"/>
    <property type="evidence" value="ECO:0000318"/>
    <property type="project" value="GO_Central"/>
</dbReference>
<dbReference type="GO" id="GO:0043565">
    <property type="term" value="F:sequence-specific DNA binding"/>
    <property type="evidence" value="ECO:0000250"/>
    <property type="project" value="UniProtKB"/>
</dbReference>
<dbReference type="GO" id="GO:0008270">
    <property type="term" value="F:zinc ion binding"/>
    <property type="evidence" value="ECO:0000250"/>
    <property type="project" value="UniProtKB"/>
</dbReference>
<dbReference type="GO" id="GO:0071504">
    <property type="term" value="P:cellular response to heparin"/>
    <property type="evidence" value="ECO:0000250"/>
    <property type="project" value="UniProtKB"/>
</dbReference>
<dbReference type="GO" id="GO:0098759">
    <property type="term" value="P:cellular response to interleukin-8"/>
    <property type="evidence" value="ECO:0000250"/>
    <property type="project" value="UniProtKB"/>
</dbReference>
<dbReference type="GO" id="GO:0071506">
    <property type="term" value="P:cellular response to mycophenolic acid"/>
    <property type="evidence" value="ECO:0000250"/>
    <property type="project" value="UniProtKB"/>
</dbReference>
<dbReference type="GO" id="GO:0032922">
    <property type="term" value="P:circadian regulation of gene expression"/>
    <property type="evidence" value="ECO:0000250"/>
    <property type="project" value="UniProtKB"/>
</dbReference>
<dbReference type="GO" id="GO:0060086">
    <property type="term" value="P:circadian temperature homeostasis"/>
    <property type="evidence" value="ECO:0000250"/>
    <property type="project" value="UniProtKB"/>
</dbReference>
<dbReference type="GO" id="GO:0044849">
    <property type="term" value="P:estrous cycle"/>
    <property type="evidence" value="ECO:0000250"/>
    <property type="project" value="UniProtKB"/>
</dbReference>
<dbReference type="GO" id="GO:0072110">
    <property type="term" value="P:glomerular mesangial cell proliferation"/>
    <property type="evidence" value="ECO:0000250"/>
    <property type="project" value="UniProtKB"/>
</dbReference>
<dbReference type="GO" id="GO:0045475">
    <property type="term" value="P:locomotor rhythm"/>
    <property type="evidence" value="ECO:0000250"/>
    <property type="project" value="UniProtKB"/>
</dbReference>
<dbReference type="GO" id="GO:0032722">
    <property type="term" value="P:positive regulation of chemokine production"/>
    <property type="evidence" value="ECO:0000250"/>
    <property type="project" value="UniProtKB"/>
</dbReference>
<dbReference type="GO" id="GO:0045893">
    <property type="term" value="P:positive regulation of DNA-templated transcription"/>
    <property type="evidence" value="ECO:0000250"/>
    <property type="project" value="UniProtKB"/>
</dbReference>
<dbReference type="GO" id="GO:0072303">
    <property type="term" value="P:positive regulation of glomerular metanephric mesangial cell proliferation"/>
    <property type="evidence" value="ECO:0000250"/>
    <property type="project" value="UniProtKB"/>
</dbReference>
<dbReference type="GO" id="GO:0046886">
    <property type="term" value="P:positive regulation of hormone biosynthetic process"/>
    <property type="evidence" value="ECO:0000250"/>
    <property type="project" value="UniProtKB"/>
</dbReference>
<dbReference type="GO" id="GO:0032731">
    <property type="term" value="P:positive regulation of interleukin-1 beta production"/>
    <property type="evidence" value="ECO:0000250"/>
    <property type="project" value="UniProtKB"/>
</dbReference>
<dbReference type="GO" id="GO:0045944">
    <property type="term" value="P:positive regulation of transcription by RNA polymerase II"/>
    <property type="evidence" value="ECO:0000250"/>
    <property type="project" value="UniProtKB"/>
</dbReference>
<dbReference type="GO" id="GO:2000182">
    <property type="term" value="P:regulation of progesterone biosynthetic process"/>
    <property type="evidence" value="ECO:0000250"/>
    <property type="project" value="UniProtKB"/>
</dbReference>
<dbReference type="GO" id="GO:0006357">
    <property type="term" value="P:regulation of transcription by RNA polymerase II"/>
    <property type="evidence" value="ECO:0000318"/>
    <property type="project" value="GO_Central"/>
</dbReference>
<dbReference type="GO" id="GO:0001666">
    <property type="term" value="P:response to hypoxia"/>
    <property type="evidence" value="ECO:0000250"/>
    <property type="project" value="UniProtKB"/>
</dbReference>
<dbReference type="GO" id="GO:0002931">
    <property type="term" value="P:response to ischemia"/>
    <property type="evidence" value="ECO:0000250"/>
    <property type="project" value="UniProtKB"/>
</dbReference>
<dbReference type="FunFam" id="3.30.160.60:FF:000092">
    <property type="entry name" value="Early growth response protein 3"/>
    <property type="match status" value="1"/>
</dbReference>
<dbReference type="Gene3D" id="3.30.160.60">
    <property type="entry name" value="Classic Zinc Finger"/>
    <property type="match status" value="3"/>
</dbReference>
<dbReference type="InterPro" id="IPR021839">
    <property type="entry name" value="EGR1_C"/>
</dbReference>
<dbReference type="InterPro" id="IPR021849">
    <property type="entry name" value="EGR_N"/>
</dbReference>
<dbReference type="InterPro" id="IPR036236">
    <property type="entry name" value="Znf_C2H2_sf"/>
</dbReference>
<dbReference type="InterPro" id="IPR013087">
    <property type="entry name" value="Znf_C2H2_type"/>
</dbReference>
<dbReference type="PANTHER" id="PTHR23235:SF42">
    <property type="entry name" value="EARLY GROWTH RESPONSE PROTEIN 1"/>
    <property type="match status" value="1"/>
</dbReference>
<dbReference type="PANTHER" id="PTHR23235">
    <property type="entry name" value="KRUEPPEL-LIKE TRANSCRIPTION FACTOR"/>
    <property type="match status" value="1"/>
</dbReference>
<dbReference type="Pfam" id="PF11914">
    <property type="entry name" value="DUF3432"/>
    <property type="match status" value="1"/>
</dbReference>
<dbReference type="Pfam" id="PF11928">
    <property type="entry name" value="DUF3446"/>
    <property type="match status" value="1"/>
</dbReference>
<dbReference type="Pfam" id="PF00096">
    <property type="entry name" value="zf-C2H2"/>
    <property type="match status" value="2"/>
</dbReference>
<dbReference type="SMART" id="SM00355">
    <property type="entry name" value="ZnF_C2H2"/>
    <property type="match status" value="3"/>
</dbReference>
<dbReference type="SUPFAM" id="SSF57667">
    <property type="entry name" value="beta-beta-alpha zinc fingers"/>
    <property type="match status" value="2"/>
</dbReference>
<dbReference type="PROSITE" id="PS00028">
    <property type="entry name" value="ZINC_FINGER_C2H2_1"/>
    <property type="match status" value="2"/>
</dbReference>
<dbReference type="PROSITE" id="PS50157">
    <property type="entry name" value="ZINC_FINGER_C2H2_2"/>
    <property type="match status" value="3"/>
</dbReference>